<reference key="1">
    <citation type="journal article" date="1984" name="Mol. Biol. Evol.">
        <title>Amino acid sequences of lower vertebrate parvalbumins and their evolution: parvalbumins of boa, turtle, and salamander.</title>
        <authorList>
            <person name="Maeda N."/>
            <person name="Zhu D."/>
            <person name="Fitch W.M."/>
        </authorList>
    </citation>
    <scope>PROTEIN SEQUENCE</scope>
</reference>
<name>PRVB_GRAGE</name>
<sequence length="108" mass="11583">AMTDILSAKDIEAALTSCQAADSFNYKSFFSKVGLKGKSTDQVKKIFGILDQDKSGFIEEDELQLFLQNFSSTARALTAAETKAFMAAGDTDGDGKIGVDEFQALVKA</sequence>
<proteinExistence type="evidence at protein level"/>
<accession>P02614</accession>
<feature type="chain" id="PRO_0000073610" description="Parvalbumin beta">
    <location>
        <begin position="1"/>
        <end position="108"/>
    </location>
</feature>
<feature type="domain" description="EF-hand 1" evidence="3">
    <location>
        <begin position="38"/>
        <end position="73"/>
    </location>
</feature>
<feature type="domain" description="EF-hand 2" evidence="3">
    <location>
        <begin position="77"/>
        <end position="108"/>
    </location>
</feature>
<feature type="binding site" evidence="3">
    <location>
        <position position="51"/>
    </location>
    <ligand>
        <name>Ca(2+)</name>
        <dbReference type="ChEBI" id="CHEBI:29108"/>
        <label>1</label>
    </ligand>
</feature>
<feature type="binding site" evidence="3">
    <location>
        <position position="53"/>
    </location>
    <ligand>
        <name>Ca(2+)</name>
        <dbReference type="ChEBI" id="CHEBI:29108"/>
        <label>1</label>
    </ligand>
</feature>
<feature type="binding site" evidence="3">
    <location>
        <position position="55"/>
    </location>
    <ligand>
        <name>Ca(2+)</name>
        <dbReference type="ChEBI" id="CHEBI:29108"/>
        <label>1</label>
    </ligand>
</feature>
<feature type="binding site" evidence="2">
    <location>
        <position position="57"/>
    </location>
    <ligand>
        <name>Ca(2+)</name>
        <dbReference type="ChEBI" id="CHEBI:29108"/>
        <label>1</label>
    </ligand>
</feature>
<feature type="binding site" evidence="2">
    <location>
        <position position="59"/>
    </location>
    <ligand>
        <name>Ca(2+)</name>
        <dbReference type="ChEBI" id="CHEBI:29108"/>
        <label>1</label>
    </ligand>
</feature>
<feature type="binding site" evidence="3">
    <location>
        <position position="62"/>
    </location>
    <ligand>
        <name>Ca(2+)</name>
        <dbReference type="ChEBI" id="CHEBI:29108"/>
        <label>1</label>
    </ligand>
</feature>
<feature type="binding site" evidence="3">
    <location>
        <position position="90"/>
    </location>
    <ligand>
        <name>Ca(2+)</name>
        <dbReference type="ChEBI" id="CHEBI:29108"/>
        <label>2</label>
    </ligand>
</feature>
<feature type="binding site" evidence="3">
    <location>
        <position position="92"/>
    </location>
    <ligand>
        <name>Ca(2+)</name>
        <dbReference type="ChEBI" id="CHEBI:29108"/>
        <label>2</label>
    </ligand>
</feature>
<feature type="binding site" evidence="3">
    <location>
        <position position="94"/>
    </location>
    <ligand>
        <name>Ca(2+)</name>
        <dbReference type="ChEBI" id="CHEBI:29108"/>
        <label>2</label>
    </ligand>
</feature>
<feature type="binding site" evidence="3">
    <location>
        <position position="96"/>
    </location>
    <ligand>
        <name>Ca(2+)</name>
        <dbReference type="ChEBI" id="CHEBI:29108"/>
        <label>2</label>
    </ligand>
</feature>
<feature type="binding site" evidence="3">
    <location>
        <position position="101"/>
    </location>
    <ligand>
        <name>Ca(2+)</name>
        <dbReference type="ChEBI" id="CHEBI:29108"/>
        <label>2</label>
    </ligand>
</feature>
<protein>
    <recommendedName>
        <fullName>Parvalbumin beta</fullName>
    </recommendedName>
</protein>
<dbReference type="PIR" id="A03049">
    <property type="entry name" value="PVTTMB"/>
</dbReference>
<dbReference type="SMR" id="P02614"/>
<dbReference type="GO" id="GO:0005737">
    <property type="term" value="C:cytoplasm"/>
    <property type="evidence" value="ECO:0007669"/>
    <property type="project" value="TreeGrafter"/>
</dbReference>
<dbReference type="GO" id="GO:0005509">
    <property type="term" value="F:calcium ion binding"/>
    <property type="evidence" value="ECO:0007669"/>
    <property type="project" value="InterPro"/>
</dbReference>
<dbReference type="CDD" id="cd16255">
    <property type="entry name" value="EFh_parvalbumin_beta"/>
    <property type="match status" value="1"/>
</dbReference>
<dbReference type="FunFam" id="1.10.238.10:FF:000060">
    <property type="entry name" value="Parvalbumin, thymic"/>
    <property type="match status" value="1"/>
</dbReference>
<dbReference type="Gene3D" id="1.10.238.10">
    <property type="entry name" value="EF-hand"/>
    <property type="match status" value="1"/>
</dbReference>
<dbReference type="InterPro" id="IPR011992">
    <property type="entry name" value="EF-hand-dom_pair"/>
</dbReference>
<dbReference type="InterPro" id="IPR018247">
    <property type="entry name" value="EF_Hand_1_Ca_BS"/>
</dbReference>
<dbReference type="InterPro" id="IPR002048">
    <property type="entry name" value="EF_hand_dom"/>
</dbReference>
<dbReference type="InterPro" id="IPR008080">
    <property type="entry name" value="Parvalbumin"/>
</dbReference>
<dbReference type="PANTHER" id="PTHR11653">
    <property type="entry name" value="PARVALBUMIN ALPHA"/>
    <property type="match status" value="1"/>
</dbReference>
<dbReference type="PANTHER" id="PTHR11653:SF3">
    <property type="entry name" value="PARVALBUMIN, THYMIC"/>
    <property type="match status" value="1"/>
</dbReference>
<dbReference type="Pfam" id="PF13499">
    <property type="entry name" value="EF-hand_7"/>
    <property type="match status" value="1"/>
</dbReference>
<dbReference type="PRINTS" id="PR01697">
    <property type="entry name" value="PARVALBUMIN"/>
</dbReference>
<dbReference type="SMART" id="SM00054">
    <property type="entry name" value="EFh"/>
    <property type="match status" value="2"/>
</dbReference>
<dbReference type="SUPFAM" id="SSF47473">
    <property type="entry name" value="EF-hand"/>
    <property type="match status" value="1"/>
</dbReference>
<dbReference type="PROSITE" id="PS00018">
    <property type="entry name" value="EF_HAND_1"/>
    <property type="match status" value="2"/>
</dbReference>
<dbReference type="PROSITE" id="PS50222">
    <property type="entry name" value="EF_HAND_2"/>
    <property type="match status" value="2"/>
</dbReference>
<organism>
    <name type="scientific">Graptemys geographica</name>
    <name type="common">Common map turtle</name>
    <name type="synonym">Testudo geographica</name>
    <dbReference type="NCBI Taxonomy" id="8481"/>
    <lineage>
        <taxon>Eukaryota</taxon>
        <taxon>Metazoa</taxon>
        <taxon>Chordata</taxon>
        <taxon>Craniata</taxon>
        <taxon>Vertebrata</taxon>
        <taxon>Euteleostomi</taxon>
        <taxon>Archelosauria</taxon>
        <taxon>Testudinata</taxon>
        <taxon>Testudines</taxon>
        <taxon>Cryptodira</taxon>
        <taxon>Durocryptodira</taxon>
        <taxon>Testudinoidea</taxon>
        <taxon>Emydidae</taxon>
        <taxon>Graptemys</taxon>
    </lineage>
</organism>
<comment type="function">
    <text evidence="1">In muscle, parvalbumin is thought to be involved in relaxation after contraction. It binds two calcium ions (By similarity).</text>
</comment>
<comment type="similarity">
    <text evidence="4">Belongs to the parvalbumin family.</text>
</comment>
<keyword id="KW-0106">Calcium</keyword>
<keyword id="KW-0903">Direct protein sequencing</keyword>
<keyword id="KW-0479">Metal-binding</keyword>
<keyword id="KW-0514">Muscle protein</keyword>
<keyword id="KW-0677">Repeat</keyword>
<evidence type="ECO:0000250" key="1"/>
<evidence type="ECO:0000250" key="2">
    <source>
        <dbReference type="UniProtKB" id="P02621"/>
    </source>
</evidence>
<evidence type="ECO:0000255" key="3">
    <source>
        <dbReference type="PROSITE-ProRule" id="PRU00448"/>
    </source>
</evidence>
<evidence type="ECO:0000305" key="4"/>